<protein>
    <recommendedName>
        <fullName evidence="1">Pyridoxine/pyridoxamine 5'-phosphate oxidase</fullName>
        <ecNumber evidence="1">1.4.3.5</ecNumber>
    </recommendedName>
    <alternativeName>
        <fullName evidence="1">PNP/PMP oxidase</fullName>
        <shortName evidence="1">PNPOx</shortName>
    </alternativeName>
    <alternativeName>
        <fullName evidence="1">Pyridoxal 5'-phosphate synthase</fullName>
    </alternativeName>
</protein>
<comment type="function">
    <text evidence="1">Catalyzes the oxidation of either pyridoxine 5'-phosphate (PNP) or pyridoxamine 5'-phosphate (PMP) into pyridoxal 5'-phosphate (PLP).</text>
</comment>
<comment type="catalytic activity">
    <reaction evidence="1">
        <text>pyridoxamine 5'-phosphate + O2 + H2O = pyridoxal 5'-phosphate + H2O2 + NH4(+)</text>
        <dbReference type="Rhea" id="RHEA:15817"/>
        <dbReference type="ChEBI" id="CHEBI:15377"/>
        <dbReference type="ChEBI" id="CHEBI:15379"/>
        <dbReference type="ChEBI" id="CHEBI:16240"/>
        <dbReference type="ChEBI" id="CHEBI:28938"/>
        <dbReference type="ChEBI" id="CHEBI:58451"/>
        <dbReference type="ChEBI" id="CHEBI:597326"/>
        <dbReference type="EC" id="1.4.3.5"/>
    </reaction>
</comment>
<comment type="catalytic activity">
    <reaction evidence="1">
        <text>pyridoxine 5'-phosphate + O2 = pyridoxal 5'-phosphate + H2O2</text>
        <dbReference type="Rhea" id="RHEA:15149"/>
        <dbReference type="ChEBI" id="CHEBI:15379"/>
        <dbReference type="ChEBI" id="CHEBI:16240"/>
        <dbReference type="ChEBI" id="CHEBI:58589"/>
        <dbReference type="ChEBI" id="CHEBI:597326"/>
        <dbReference type="EC" id="1.4.3.5"/>
    </reaction>
</comment>
<comment type="cofactor">
    <cofactor evidence="1">
        <name>FMN</name>
        <dbReference type="ChEBI" id="CHEBI:58210"/>
    </cofactor>
    <text evidence="1">Binds 1 FMN per subunit.</text>
</comment>
<comment type="pathway">
    <text evidence="1">Cofactor metabolism; pyridoxal 5'-phosphate salvage; pyridoxal 5'-phosphate from pyridoxamine 5'-phosphate: step 1/1.</text>
</comment>
<comment type="pathway">
    <text evidence="1">Cofactor metabolism; pyridoxal 5'-phosphate salvage; pyridoxal 5'-phosphate from pyridoxine 5'-phosphate: step 1/1.</text>
</comment>
<comment type="subunit">
    <text evidence="1">Homodimer.</text>
</comment>
<comment type="similarity">
    <text evidence="1">Belongs to the pyridoxamine 5'-phosphate oxidase family.</text>
</comment>
<keyword id="KW-0285">Flavoprotein</keyword>
<keyword id="KW-0288">FMN</keyword>
<keyword id="KW-0560">Oxidoreductase</keyword>
<keyword id="KW-0664">Pyridoxine biosynthesis</keyword>
<keyword id="KW-1185">Reference proteome</keyword>
<accession>Q13UP6</accession>
<reference key="1">
    <citation type="journal article" date="2006" name="Proc. Natl. Acad. Sci. U.S.A.">
        <title>Burkholderia xenovorans LB400 harbors a multi-replicon, 9.73-Mbp genome shaped for versatility.</title>
        <authorList>
            <person name="Chain P.S.G."/>
            <person name="Denef V.J."/>
            <person name="Konstantinidis K.T."/>
            <person name="Vergez L.M."/>
            <person name="Agullo L."/>
            <person name="Reyes V.L."/>
            <person name="Hauser L."/>
            <person name="Cordova M."/>
            <person name="Gomez L."/>
            <person name="Gonzalez M."/>
            <person name="Land M."/>
            <person name="Lao V."/>
            <person name="Larimer F."/>
            <person name="LiPuma J.J."/>
            <person name="Mahenthiralingam E."/>
            <person name="Malfatti S.A."/>
            <person name="Marx C.J."/>
            <person name="Parnell J.J."/>
            <person name="Ramette A."/>
            <person name="Richardson P."/>
            <person name="Seeger M."/>
            <person name="Smith D."/>
            <person name="Spilker T."/>
            <person name="Sul W.J."/>
            <person name="Tsoi T.V."/>
            <person name="Ulrich L.E."/>
            <person name="Zhulin I.B."/>
            <person name="Tiedje J.M."/>
        </authorList>
    </citation>
    <scope>NUCLEOTIDE SEQUENCE [LARGE SCALE GENOMIC DNA]</scope>
    <source>
        <strain>LB400</strain>
    </source>
</reference>
<dbReference type="EC" id="1.4.3.5" evidence="1"/>
<dbReference type="EMBL" id="CP000270">
    <property type="protein sequence ID" value="ABE32193.1"/>
    <property type="molecule type" value="Genomic_DNA"/>
</dbReference>
<dbReference type="RefSeq" id="WP_011489690.1">
    <property type="nucleotide sequence ID" value="NC_007951.1"/>
</dbReference>
<dbReference type="SMR" id="Q13UP6"/>
<dbReference type="STRING" id="266265.Bxe_A0741"/>
<dbReference type="KEGG" id="bxb:DR64_2909"/>
<dbReference type="KEGG" id="bxe:Bxe_A0741"/>
<dbReference type="PATRIC" id="fig|266265.5.peg.3853"/>
<dbReference type="eggNOG" id="COG0259">
    <property type="taxonomic scope" value="Bacteria"/>
</dbReference>
<dbReference type="OrthoDB" id="9780392at2"/>
<dbReference type="UniPathway" id="UPA01068">
    <property type="reaction ID" value="UER00304"/>
</dbReference>
<dbReference type="UniPathway" id="UPA01068">
    <property type="reaction ID" value="UER00305"/>
</dbReference>
<dbReference type="Proteomes" id="UP000001817">
    <property type="component" value="Chromosome 1"/>
</dbReference>
<dbReference type="GO" id="GO:0010181">
    <property type="term" value="F:FMN binding"/>
    <property type="evidence" value="ECO:0007669"/>
    <property type="project" value="UniProtKB-UniRule"/>
</dbReference>
<dbReference type="GO" id="GO:0004733">
    <property type="term" value="F:pyridoxamine phosphate oxidase activity"/>
    <property type="evidence" value="ECO:0007669"/>
    <property type="project" value="UniProtKB-UniRule"/>
</dbReference>
<dbReference type="GO" id="GO:0008615">
    <property type="term" value="P:pyridoxine biosynthetic process"/>
    <property type="evidence" value="ECO:0007669"/>
    <property type="project" value="UniProtKB-KW"/>
</dbReference>
<dbReference type="FunFam" id="2.30.110.10:FF:000005">
    <property type="entry name" value="NAD(P)H-hydrate epimerase"/>
    <property type="match status" value="1"/>
</dbReference>
<dbReference type="Gene3D" id="2.30.110.10">
    <property type="entry name" value="Electron Transport, Fmn-binding Protein, Chain A"/>
    <property type="match status" value="1"/>
</dbReference>
<dbReference type="HAMAP" id="MF_01629">
    <property type="entry name" value="PdxH"/>
    <property type="match status" value="1"/>
</dbReference>
<dbReference type="InterPro" id="IPR000659">
    <property type="entry name" value="Pyridox_Oxase"/>
</dbReference>
<dbReference type="InterPro" id="IPR019740">
    <property type="entry name" value="Pyridox_Oxase_CS"/>
</dbReference>
<dbReference type="InterPro" id="IPR011576">
    <property type="entry name" value="Pyridox_Oxase_N"/>
</dbReference>
<dbReference type="InterPro" id="IPR019576">
    <property type="entry name" value="Pyridoxamine_oxidase_dimer_C"/>
</dbReference>
<dbReference type="InterPro" id="IPR012349">
    <property type="entry name" value="Split_barrel_FMN-bd"/>
</dbReference>
<dbReference type="NCBIfam" id="TIGR00558">
    <property type="entry name" value="pdxH"/>
    <property type="match status" value="1"/>
</dbReference>
<dbReference type="NCBIfam" id="NF004231">
    <property type="entry name" value="PRK05679.1"/>
    <property type="match status" value="1"/>
</dbReference>
<dbReference type="PANTHER" id="PTHR10851:SF0">
    <property type="entry name" value="PYRIDOXINE-5'-PHOSPHATE OXIDASE"/>
    <property type="match status" value="1"/>
</dbReference>
<dbReference type="PANTHER" id="PTHR10851">
    <property type="entry name" value="PYRIDOXINE-5-PHOSPHATE OXIDASE"/>
    <property type="match status" value="1"/>
</dbReference>
<dbReference type="Pfam" id="PF10590">
    <property type="entry name" value="PNP_phzG_C"/>
    <property type="match status" value="1"/>
</dbReference>
<dbReference type="Pfam" id="PF01243">
    <property type="entry name" value="PNPOx_N"/>
    <property type="match status" value="1"/>
</dbReference>
<dbReference type="PIRSF" id="PIRSF000190">
    <property type="entry name" value="Pyd_amn-ph_oxd"/>
    <property type="match status" value="1"/>
</dbReference>
<dbReference type="SUPFAM" id="SSF50475">
    <property type="entry name" value="FMN-binding split barrel"/>
    <property type="match status" value="1"/>
</dbReference>
<dbReference type="PROSITE" id="PS01064">
    <property type="entry name" value="PYRIDOX_OXIDASE"/>
    <property type="match status" value="1"/>
</dbReference>
<gene>
    <name evidence="1" type="primary">pdxH</name>
    <name type="ordered locus">Bxeno_A3655</name>
    <name type="ORF">Bxe_A0741</name>
</gene>
<name>PDXH_PARXL</name>
<evidence type="ECO:0000255" key="1">
    <source>
        <dbReference type="HAMAP-Rule" id="MF_01629"/>
    </source>
</evidence>
<feature type="chain" id="PRO_0000255861" description="Pyridoxine/pyridoxamine 5'-phosphate oxidase">
    <location>
        <begin position="1"/>
        <end position="213"/>
    </location>
</feature>
<feature type="binding site" evidence="1">
    <location>
        <begin position="8"/>
        <end position="11"/>
    </location>
    <ligand>
        <name>substrate</name>
    </ligand>
</feature>
<feature type="binding site" evidence="1">
    <location>
        <begin position="61"/>
        <end position="66"/>
    </location>
    <ligand>
        <name>FMN</name>
        <dbReference type="ChEBI" id="CHEBI:58210"/>
    </ligand>
</feature>
<feature type="binding site" evidence="1">
    <location>
        <position position="66"/>
    </location>
    <ligand>
        <name>substrate</name>
    </ligand>
</feature>
<feature type="binding site" evidence="1">
    <location>
        <begin position="76"/>
        <end position="77"/>
    </location>
    <ligand>
        <name>FMN</name>
        <dbReference type="ChEBI" id="CHEBI:58210"/>
    </ligand>
</feature>
<feature type="binding site" evidence="1">
    <location>
        <position position="82"/>
    </location>
    <ligand>
        <name>FMN</name>
        <dbReference type="ChEBI" id="CHEBI:58210"/>
    </ligand>
</feature>
<feature type="binding site" evidence="1">
    <location>
        <position position="83"/>
    </location>
    <ligand>
        <name>FMN</name>
        <dbReference type="ChEBI" id="CHEBI:58210"/>
    </ligand>
</feature>
<feature type="binding site" evidence="1">
    <location>
        <position position="105"/>
    </location>
    <ligand>
        <name>FMN</name>
        <dbReference type="ChEBI" id="CHEBI:58210"/>
    </ligand>
</feature>
<feature type="binding site" evidence="1">
    <location>
        <position position="123"/>
    </location>
    <ligand>
        <name>substrate</name>
    </ligand>
</feature>
<feature type="binding site" evidence="1">
    <location>
        <position position="127"/>
    </location>
    <ligand>
        <name>substrate</name>
    </ligand>
</feature>
<feature type="binding site" evidence="1">
    <location>
        <position position="131"/>
    </location>
    <ligand>
        <name>substrate</name>
    </ligand>
</feature>
<feature type="binding site" evidence="1">
    <location>
        <begin position="140"/>
        <end position="141"/>
    </location>
    <ligand>
        <name>FMN</name>
        <dbReference type="ChEBI" id="CHEBI:58210"/>
    </ligand>
</feature>
<feature type="binding site" evidence="1">
    <location>
        <position position="184"/>
    </location>
    <ligand>
        <name>FMN</name>
        <dbReference type="ChEBI" id="CHEBI:58210"/>
    </ligand>
</feature>
<feature type="binding site" evidence="1">
    <location>
        <begin position="190"/>
        <end position="192"/>
    </location>
    <ligand>
        <name>substrate</name>
    </ligand>
</feature>
<feature type="binding site" evidence="1">
    <location>
        <position position="194"/>
    </location>
    <ligand>
        <name>FMN</name>
        <dbReference type="ChEBI" id="CHEBI:58210"/>
    </ligand>
</feature>
<organism>
    <name type="scientific">Paraburkholderia xenovorans (strain LB400)</name>
    <dbReference type="NCBI Taxonomy" id="266265"/>
    <lineage>
        <taxon>Bacteria</taxon>
        <taxon>Pseudomonadati</taxon>
        <taxon>Pseudomonadota</taxon>
        <taxon>Betaproteobacteria</taxon>
        <taxon>Burkholderiales</taxon>
        <taxon>Burkholderiaceae</taxon>
        <taxon>Paraburkholderia</taxon>
    </lineage>
</organism>
<proteinExistence type="inferred from homology"/>
<sequence length="213" mass="24610">MTSLAELRKNYSLGSLDVGDVDRNPFRQFDTWFKQAVDAQLPEPNTMTLATVDPRGRPSARIVLIKGVDERGFVFFTNYESRKGRELAANPYASLLFYWIELERQVRVEGRIVKTSAEESDGYFASRPLGSRIGAWASNQSQVIESRSQLETREREFSLLYGDQPPRPPHWGGYRLVPEAIEFWQGRPSRLHDRLLYTRSDEHSDWQISRLSP</sequence>